<organism>
    <name type="scientific">Thermococcus kodakarensis (strain ATCC BAA-918 / JCM 12380 / KOD1)</name>
    <name type="common">Pyrococcus kodakaraensis (strain KOD1)</name>
    <dbReference type="NCBI Taxonomy" id="69014"/>
    <lineage>
        <taxon>Archaea</taxon>
        <taxon>Methanobacteriati</taxon>
        <taxon>Methanobacteriota</taxon>
        <taxon>Thermococci</taxon>
        <taxon>Thermococcales</taxon>
        <taxon>Thermococcaceae</taxon>
        <taxon>Thermococcus</taxon>
    </lineage>
</organism>
<dbReference type="EMBL" id="AB031743">
    <property type="protein sequence ID" value="BAB17294.1"/>
    <property type="molecule type" value="Genomic_DNA"/>
</dbReference>
<dbReference type="EMBL" id="AP006878">
    <property type="protein sequence ID" value="BAD85858.1"/>
    <property type="molecule type" value="Genomic_DNA"/>
</dbReference>
<dbReference type="RefSeq" id="WP_011250620.1">
    <property type="nucleotide sequence ID" value="NC_006624.1"/>
</dbReference>
<dbReference type="SMR" id="Q9HHD0"/>
<dbReference type="STRING" id="69014.TK1669"/>
<dbReference type="EnsemblBacteria" id="BAD85858">
    <property type="protein sequence ID" value="BAD85858"/>
    <property type="gene ID" value="TK1669"/>
</dbReference>
<dbReference type="GeneID" id="78448196"/>
<dbReference type="KEGG" id="tko:TK1669"/>
<dbReference type="PATRIC" id="fig|69014.16.peg.1627"/>
<dbReference type="eggNOG" id="arCOG02202">
    <property type="taxonomic scope" value="Archaea"/>
</dbReference>
<dbReference type="HOGENOM" id="CLU_058152_0_0_2"/>
<dbReference type="InParanoid" id="Q9HHD0"/>
<dbReference type="OrthoDB" id="329751at2157"/>
<dbReference type="PhylomeDB" id="Q9HHD0"/>
<dbReference type="Proteomes" id="UP000000536">
    <property type="component" value="Chromosome"/>
</dbReference>
<dbReference type="GO" id="GO:0032153">
    <property type="term" value="C:cell division site"/>
    <property type="evidence" value="ECO:0000318"/>
    <property type="project" value="GO_Central"/>
</dbReference>
<dbReference type="GO" id="GO:0005737">
    <property type="term" value="C:cytoplasm"/>
    <property type="evidence" value="ECO:0000318"/>
    <property type="project" value="GO_Central"/>
</dbReference>
<dbReference type="GO" id="GO:0005874">
    <property type="term" value="C:microtubule"/>
    <property type="evidence" value="ECO:0007669"/>
    <property type="project" value="InterPro"/>
</dbReference>
<dbReference type="GO" id="GO:0005525">
    <property type="term" value="F:GTP binding"/>
    <property type="evidence" value="ECO:0000318"/>
    <property type="project" value="GO_Central"/>
</dbReference>
<dbReference type="GO" id="GO:0003924">
    <property type="term" value="F:GTPase activity"/>
    <property type="evidence" value="ECO:0000318"/>
    <property type="project" value="GO_Central"/>
</dbReference>
<dbReference type="GO" id="GO:0051301">
    <property type="term" value="P:cell division"/>
    <property type="evidence" value="ECO:0000318"/>
    <property type="project" value="GO_Central"/>
</dbReference>
<dbReference type="GO" id="GO:0007017">
    <property type="term" value="P:microtubule-based process"/>
    <property type="evidence" value="ECO:0007669"/>
    <property type="project" value="InterPro"/>
</dbReference>
<dbReference type="GO" id="GO:0008360">
    <property type="term" value="P:regulation of cell shape"/>
    <property type="evidence" value="ECO:0007669"/>
    <property type="project" value="UniProtKB-UniRule"/>
</dbReference>
<dbReference type="FunFam" id="3.40.50.1440:FF:000065">
    <property type="entry name" value="Tubulin-like protein CetZ"/>
    <property type="match status" value="1"/>
</dbReference>
<dbReference type="Gene3D" id="3.40.50.1440">
    <property type="entry name" value="Tubulin/FtsZ, GTPase domain"/>
    <property type="match status" value="1"/>
</dbReference>
<dbReference type="HAMAP" id="MF_01946">
    <property type="entry name" value="CetZ"/>
    <property type="match status" value="1"/>
</dbReference>
<dbReference type="InterPro" id="IPR032907">
    <property type="entry name" value="CetZ"/>
</dbReference>
<dbReference type="InterPro" id="IPR048737">
    <property type="entry name" value="CetZ_C"/>
</dbReference>
<dbReference type="InterPro" id="IPR045061">
    <property type="entry name" value="FtsZ/CetZ"/>
</dbReference>
<dbReference type="InterPro" id="IPR036525">
    <property type="entry name" value="Tubulin/FtsZ_GTPase_sf"/>
</dbReference>
<dbReference type="InterPro" id="IPR017975">
    <property type="entry name" value="Tubulin_CS"/>
</dbReference>
<dbReference type="InterPro" id="IPR003008">
    <property type="entry name" value="Tubulin_FtsZ_GTPase"/>
</dbReference>
<dbReference type="PANTHER" id="PTHR30314">
    <property type="entry name" value="CELL DIVISION PROTEIN FTSZ-RELATED"/>
    <property type="match status" value="1"/>
</dbReference>
<dbReference type="PANTHER" id="PTHR30314:SF10">
    <property type="entry name" value="TUBULIN-LIKE PROTEIN CETZ"/>
    <property type="match status" value="1"/>
</dbReference>
<dbReference type="Pfam" id="PF21011">
    <property type="entry name" value="CetZ_C"/>
    <property type="match status" value="2"/>
</dbReference>
<dbReference type="Pfam" id="PF00091">
    <property type="entry name" value="Tubulin"/>
    <property type="match status" value="1"/>
</dbReference>
<dbReference type="PRINTS" id="PR00423">
    <property type="entry name" value="CELLDVISFTSZ"/>
</dbReference>
<dbReference type="SMART" id="SM00864">
    <property type="entry name" value="Tubulin"/>
    <property type="match status" value="1"/>
</dbReference>
<dbReference type="SUPFAM" id="SSF52490">
    <property type="entry name" value="Tubulin nucleotide-binding domain-like"/>
    <property type="match status" value="1"/>
</dbReference>
<dbReference type="PROSITE" id="PS00227">
    <property type="entry name" value="TUBULIN"/>
    <property type="match status" value="1"/>
</dbReference>
<reference key="1">
    <citation type="submission" date="1999-08" db="EMBL/GenBank/DDBJ databases">
        <title>Characterization of two ftsZ homologs from Pyrococcus kodakaraensis KOD1.</title>
        <authorList>
            <person name="Nagahisa K."/>
            <person name="Nakamura T."/>
            <person name="Fujiwara S."/>
            <person name="Takagi M."/>
            <person name="Imanaka T."/>
        </authorList>
    </citation>
    <scope>NUCLEOTIDE SEQUENCE [GENOMIC DNA]</scope>
    <source>
        <strain>ATCC BAA-918 / JCM 12380 / KOD1</strain>
    </source>
</reference>
<reference key="2">
    <citation type="journal article" date="2005" name="Genome Res.">
        <title>Complete genome sequence of the hyperthermophilic archaeon Thermococcus kodakaraensis KOD1 and comparison with Pyrococcus genomes.</title>
        <authorList>
            <person name="Fukui T."/>
            <person name="Atomi H."/>
            <person name="Kanai T."/>
            <person name="Matsumi R."/>
            <person name="Fujiwara S."/>
            <person name="Imanaka T."/>
        </authorList>
    </citation>
    <scope>NUCLEOTIDE SEQUENCE [LARGE SCALE GENOMIC DNA]</scope>
    <source>
        <strain>ATCC BAA-918 / JCM 12380 / KOD1</strain>
    </source>
</reference>
<protein>
    <recommendedName>
        <fullName evidence="1">Tubulin-like protein CetZ</fullName>
    </recommendedName>
</protein>
<sequence>MRALIIGVGQCGTKIADLFALVDFDTIALNTSRGDLEYLKHIPHDRRILIGESITGGKGVNANPLLGREAMKRDLPLVMRKIGSIVGYEDVDIFFLTFGFGGGTGAGGTPVLAEALKEEYPDSLVVAIGALPLKEEGIRPTINAAITIDKLSKVADSIIAIDNNKLKESGDDISSAYEKINYTIVERIASLLALVDVPGEQTLDASDLKFVLKAFGSFATVGYAKADASKVKNLSRLIIKSFESEGLYLDANIESALYGLVAIHGPPEVLKASDIFEALDYLTSKIRGKQIFRGFYPDPRERDVEVVTLLSGIYESKSIENIVRTAKEYARSFMQAKSEAETKKKELLTGLPDFDDVYPSLEATGSDDPEGFAEYREVSR</sequence>
<gene>
    <name evidence="1" type="primary">cetZ</name>
    <name type="synonym">ftsZ3</name>
    <name type="synonym">tubA</name>
    <name type="ordered locus">TK1669</name>
</gene>
<proteinExistence type="inferred from homology"/>
<accession>Q9HHD0</accession>
<keyword id="KW-0133">Cell shape</keyword>
<keyword id="KW-0963">Cytoplasm</keyword>
<keyword id="KW-0342">GTP-binding</keyword>
<keyword id="KW-0547">Nucleotide-binding</keyword>
<keyword id="KW-1185">Reference proteome</keyword>
<evidence type="ECO:0000255" key="1">
    <source>
        <dbReference type="HAMAP-Rule" id="MF_01946"/>
    </source>
</evidence>
<evidence type="ECO:0000256" key="2">
    <source>
        <dbReference type="SAM" id="MobiDB-lite"/>
    </source>
</evidence>
<comment type="function">
    <text evidence="1">Involved in cell shape control.</text>
</comment>
<comment type="subcellular location">
    <subcellularLocation>
        <location evidence="1">Cytoplasm</location>
    </subcellularLocation>
</comment>
<comment type="similarity">
    <text evidence="1">Belongs to the CetZ family.</text>
</comment>
<name>CETZ_THEKO</name>
<feature type="chain" id="PRO_0000114416" description="Tubulin-like protein CetZ">
    <location>
        <begin position="1"/>
        <end position="380"/>
    </location>
</feature>
<feature type="region of interest" description="Disordered" evidence="2">
    <location>
        <begin position="359"/>
        <end position="380"/>
    </location>
</feature>
<feature type="binding site" evidence="1">
    <location>
        <begin position="10"/>
        <end position="14"/>
    </location>
    <ligand>
        <name>GTP</name>
        <dbReference type="ChEBI" id="CHEBI:37565"/>
    </ligand>
</feature>
<feature type="binding site" evidence="1">
    <location>
        <begin position="103"/>
        <end position="105"/>
    </location>
    <ligand>
        <name>GTP</name>
        <dbReference type="ChEBI" id="CHEBI:37565"/>
    </ligand>
</feature>
<feature type="binding site" evidence="1">
    <location>
        <position position="136"/>
    </location>
    <ligand>
        <name>GTP</name>
        <dbReference type="ChEBI" id="CHEBI:37565"/>
    </ligand>
</feature>
<feature type="binding site" evidence="1">
    <location>
        <position position="163"/>
    </location>
    <ligand>
        <name>GTP</name>
        <dbReference type="ChEBI" id="CHEBI:37565"/>
    </ligand>
</feature>
<feature type="binding site" evidence="1">
    <location>
        <position position="181"/>
    </location>
    <ligand>
        <name>GTP</name>
        <dbReference type="ChEBI" id="CHEBI:37565"/>
    </ligand>
</feature>